<dbReference type="EC" id="2.3.1.274" evidence="1"/>
<dbReference type="EMBL" id="AE015927">
    <property type="protein sequence ID" value="AAO35810.1"/>
    <property type="status" value="ALT_INIT"/>
    <property type="molecule type" value="Genomic_DNA"/>
</dbReference>
<dbReference type="RefSeq" id="WP_035109906.1">
    <property type="nucleotide sequence ID" value="NC_004557.1"/>
</dbReference>
<dbReference type="SMR" id="Q895N0"/>
<dbReference type="STRING" id="212717.CTC_01242"/>
<dbReference type="GeneID" id="24252750"/>
<dbReference type="KEGG" id="ctc:CTC_01242"/>
<dbReference type="HOGENOM" id="CLU_039379_1_1_9"/>
<dbReference type="OrthoDB" id="9806408at2"/>
<dbReference type="UniPathway" id="UPA00085"/>
<dbReference type="Proteomes" id="UP000001412">
    <property type="component" value="Chromosome"/>
</dbReference>
<dbReference type="GO" id="GO:0005737">
    <property type="term" value="C:cytoplasm"/>
    <property type="evidence" value="ECO:0007669"/>
    <property type="project" value="UniProtKB-SubCell"/>
</dbReference>
<dbReference type="GO" id="GO:0043811">
    <property type="term" value="F:phosphate:acyl-[acyl carrier protein] acyltransferase activity"/>
    <property type="evidence" value="ECO:0007669"/>
    <property type="project" value="UniProtKB-UniRule"/>
</dbReference>
<dbReference type="GO" id="GO:0006633">
    <property type="term" value="P:fatty acid biosynthetic process"/>
    <property type="evidence" value="ECO:0007669"/>
    <property type="project" value="UniProtKB-UniRule"/>
</dbReference>
<dbReference type="GO" id="GO:0008654">
    <property type="term" value="P:phospholipid biosynthetic process"/>
    <property type="evidence" value="ECO:0007669"/>
    <property type="project" value="UniProtKB-KW"/>
</dbReference>
<dbReference type="Gene3D" id="3.40.718.10">
    <property type="entry name" value="Isopropylmalate Dehydrogenase"/>
    <property type="match status" value="1"/>
</dbReference>
<dbReference type="HAMAP" id="MF_00019">
    <property type="entry name" value="PlsX"/>
    <property type="match status" value="1"/>
</dbReference>
<dbReference type="InterPro" id="IPR003664">
    <property type="entry name" value="FA_synthesis"/>
</dbReference>
<dbReference type="InterPro" id="IPR012281">
    <property type="entry name" value="Phospholipid_synth_PlsX-like"/>
</dbReference>
<dbReference type="NCBIfam" id="TIGR00182">
    <property type="entry name" value="plsX"/>
    <property type="match status" value="1"/>
</dbReference>
<dbReference type="PANTHER" id="PTHR30100">
    <property type="entry name" value="FATTY ACID/PHOSPHOLIPID SYNTHESIS PROTEIN PLSX"/>
    <property type="match status" value="1"/>
</dbReference>
<dbReference type="PANTHER" id="PTHR30100:SF1">
    <property type="entry name" value="PHOSPHATE ACYLTRANSFERASE"/>
    <property type="match status" value="1"/>
</dbReference>
<dbReference type="Pfam" id="PF02504">
    <property type="entry name" value="FA_synthesis"/>
    <property type="match status" value="1"/>
</dbReference>
<dbReference type="PIRSF" id="PIRSF002465">
    <property type="entry name" value="Phsphlp_syn_PlsX"/>
    <property type="match status" value="1"/>
</dbReference>
<dbReference type="SUPFAM" id="SSF53659">
    <property type="entry name" value="Isocitrate/Isopropylmalate dehydrogenase-like"/>
    <property type="match status" value="1"/>
</dbReference>
<sequence>MKIAVDGMGGDFAPKEVVAGCVDALNENKDLHIVITGKEELIKKELEGHNYDEDRIEVLDAREVISTNDSPVMAIRRKKDSSLNKGLQLVKEKKVEGIISAGSTGAFMAGSLFIVGRIKGIDRPALAPIMPGKNAPFMVIDVGANAECKPQNLLQFALMGKIYFEKILNVKNPTIGLVNIGVEEEKGTELTKEAYKLLKNSGLNFIGNVEPRDIPTGDVNILVCDGFTGNTILKTYEGVAQNIFEILKAEIMSSFQGKIGGALLKPSFKNIKKKFNYKEYGGAAFIGVEGICVKAHGSSDRKAFKNAIKQCINFHKGNIINNIKEELVNIETLH</sequence>
<protein>
    <recommendedName>
        <fullName evidence="1">Phosphate acyltransferase</fullName>
        <ecNumber evidence="1">2.3.1.274</ecNumber>
    </recommendedName>
    <alternativeName>
        <fullName evidence="1">Acyl-ACP phosphotransacylase</fullName>
    </alternativeName>
    <alternativeName>
        <fullName evidence="1">Acyl-[acyl-carrier-protein]--phosphate acyltransferase</fullName>
    </alternativeName>
    <alternativeName>
        <fullName evidence="1">Phosphate-acyl-ACP acyltransferase</fullName>
    </alternativeName>
</protein>
<proteinExistence type="inferred from homology"/>
<comment type="function">
    <text evidence="1">Catalyzes the reversible formation of acyl-phosphate (acyl-PO(4)) from acyl-[acyl-carrier-protein] (acyl-ACP). This enzyme utilizes acyl-ACP as fatty acyl donor, but not acyl-CoA.</text>
</comment>
<comment type="catalytic activity">
    <reaction evidence="1">
        <text>a fatty acyl-[ACP] + phosphate = an acyl phosphate + holo-[ACP]</text>
        <dbReference type="Rhea" id="RHEA:42292"/>
        <dbReference type="Rhea" id="RHEA-COMP:9685"/>
        <dbReference type="Rhea" id="RHEA-COMP:14125"/>
        <dbReference type="ChEBI" id="CHEBI:43474"/>
        <dbReference type="ChEBI" id="CHEBI:59918"/>
        <dbReference type="ChEBI" id="CHEBI:64479"/>
        <dbReference type="ChEBI" id="CHEBI:138651"/>
        <dbReference type="EC" id="2.3.1.274"/>
    </reaction>
</comment>
<comment type="pathway">
    <text evidence="1">Lipid metabolism; phospholipid metabolism.</text>
</comment>
<comment type="subunit">
    <text evidence="1">Homodimer. Probably interacts with PlsY.</text>
</comment>
<comment type="subcellular location">
    <subcellularLocation>
        <location evidence="1">Cytoplasm</location>
    </subcellularLocation>
    <text evidence="1">Associated with the membrane possibly through PlsY.</text>
</comment>
<comment type="similarity">
    <text evidence="1">Belongs to the PlsX family.</text>
</comment>
<comment type="sequence caution" evidence="2">
    <conflict type="erroneous initiation">
        <sequence resource="EMBL-CDS" id="AAO35810"/>
    </conflict>
</comment>
<accession>Q895N0</accession>
<name>PLSX_CLOTE</name>
<evidence type="ECO:0000255" key="1">
    <source>
        <dbReference type="HAMAP-Rule" id="MF_00019"/>
    </source>
</evidence>
<evidence type="ECO:0000305" key="2"/>
<reference key="1">
    <citation type="journal article" date="2003" name="Proc. Natl. Acad. Sci. U.S.A.">
        <title>The genome sequence of Clostridium tetani, the causative agent of tetanus disease.</title>
        <authorList>
            <person name="Brueggemann H."/>
            <person name="Baeumer S."/>
            <person name="Fricke W.F."/>
            <person name="Wiezer A."/>
            <person name="Liesegang H."/>
            <person name="Decker I."/>
            <person name="Herzberg C."/>
            <person name="Martinez-Arias R."/>
            <person name="Merkl R."/>
            <person name="Henne A."/>
            <person name="Gottschalk G."/>
        </authorList>
    </citation>
    <scope>NUCLEOTIDE SEQUENCE [LARGE SCALE GENOMIC DNA]</scope>
    <source>
        <strain>Massachusetts / E88</strain>
    </source>
</reference>
<keyword id="KW-0963">Cytoplasm</keyword>
<keyword id="KW-0444">Lipid biosynthesis</keyword>
<keyword id="KW-0443">Lipid metabolism</keyword>
<keyword id="KW-0594">Phospholipid biosynthesis</keyword>
<keyword id="KW-1208">Phospholipid metabolism</keyword>
<keyword id="KW-1185">Reference proteome</keyword>
<keyword id="KW-0808">Transferase</keyword>
<organism>
    <name type="scientific">Clostridium tetani (strain Massachusetts / E88)</name>
    <dbReference type="NCBI Taxonomy" id="212717"/>
    <lineage>
        <taxon>Bacteria</taxon>
        <taxon>Bacillati</taxon>
        <taxon>Bacillota</taxon>
        <taxon>Clostridia</taxon>
        <taxon>Eubacteriales</taxon>
        <taxon>Clostridiaceae</taxon>
        <taxon>Clostridium</taxon>
    </lineage>
</organism>
<gene>
    <name evidence="1" type="primary">plsX</name>
    <name type="ordered locus">CTC_01242</name>
</gene>
<feature type="chain" id="PRO_0000189870" description="Phosphate acyltransferase">
    <location>
        <begin position="1"/>
        <end position="334"/>
    </location>
</feature>